<name>YDIB_ECOK1</name>
<evidence type="ECO:0000255" key="1">
    <source>
        <dbReference type="HAMAP-Rule" id="MF_01578"/>
    </source>
</evidence>
<keyword id="KW-0028">Amino-acid biosynthesis</keyword>
<keyword id="KW-0057">Aromatic amino acid biosynthesis</keyword>
<keyword id="KW-0520">NAD</keyword>
<keyword id="KW-0521">NADP</keyword>
<keyword id="KW-0560">Oxidoreductase</keyword>
<keyword id="KW-1185">Reference proteome</keyword>
<feature type="chain" id="PRO_0000280772" description="Quinate/shikimate dehydrogenase">
    <location>
        <begin position="1"/>
        <end position="288"/>
    </location>
</feature>
<feature type="binding site" evidence="1">
    <location>
        <position position="71"/>
    </location>
    <ligand>
        <name>substrate</name>
    </ligand>
</feature>
<feature type="binding site" evidence="1">
    <location>
        <position position="107"/>
    </location>
    <ligand>
        <name>substrate</name>
    </ligand>
</feature>
<feature type="binding site" evidence="1">
    <location>
        <begin position="132"/>
        <end position="135"/>
    </location>
    <ligand>
        <name>NAD(+)</name>
        <dbReference type="ChEBI" id="CHEBI:57540"/>
    </ligand>
</feature>
<feature type="binding site" evidence="1">
    <location>
        <begin position="155"/>
        <end position="158"/>
    </location>
    <ligand>
        <name>NAD(+)</name>
        <dbReference type="ChEBI" id="CHEBI:57540"/>
    </ligand>
</feature>
<feature type="binding site" evidence="1">
    <location>
        <position position="205"/>
    </location>
    <ligand>
        <name>NAD(+)</name>
        <dbReference type="ChEBI" id="CHEBI:57540"/>
    </ligand>
</feature>
<feature type="binding site" evidence="1">
    <location>
        <begin position="232"/>
        <end position="235"/>
    </location>
    <ligand>
        <name>NAD(+)</name>
        <dbReference type="ChEBI" id="CHEBI:57540"/>
    </ligand>
</feature>
<feature type="binding site" evidence="1">
    <location>
        <position position="255"/>
    </location>
    <ligand>
        <name>NAD(+)</name>
        <dbReference type="ChEBI" id="CHEBI:57540"/>
    </ligand>
</feature>
<gene>
    <name evidence="1" type="primary">ydiB</name>
    <name type="ordered locus">Ecok1_15750</name>
    <name type="ORF">APECO1_768</name>
</gene>
<sequence>MDVTAKYELIGLMAYPIRHSLSPEMQNKALEKAGLPFTYMAFEVDNDSFPAAIEGLKALKMRGTGVSMPNKQLACEYVDELTPAAKLVGAINTIVNDDGYLRGYNTDGTGHIRAIKESGFDIKGKTMVLLGAGGASTAIGAQGAIEGLKEIKLFNRRDEFFDKALAFAQRVNENTDCVVTVTDLADQQAFAEALASADILTNGTKVGMKPLENESLVNDISLLHPGLLVTECVYNPHMTKLLQQAQQAGCKTIDGYGMLLWQGAEQFTLWTGKDFPLEYVKQVMGFGA</sequence>
<proteinExistence type="inferred from homology"/>
<dbReference type="EC" id="1.1.1.282" evidence="1"/>
<dbReference type="EMBL" id="CP000468">
    <property type="protein sequence ID" value="ABJ01069.1"/>
    <property type="molecule type" value="Genomic_DNA"/>
</dbReference>
<dbReference type="RefSeq" id="WP_000383457.1">
    <property type="nucleotide sequence ID" value="NZ_CADILS010000002.1"/>
</dbReference>
<dbReference type="SMR" id="A1ABM9"/>
<dbReference type="KEGG" id="ecv:APECO1_768"/>
<dbReference type="HOGENOM" id="CLU_044063_4_4_6"/>
<dbReference type="UniPathway" id="UPA00053">
    <property type="reaction ID" value="UER00087"/>
</dbReference>
<dbReference type="Proteomes" id="UP000008216">
    <property type="component" value="Chromosome"/>
</dbReference>
<dbReference type="GO" id="GO:0030266">
    <property type="term" value="F:quinate 3-dehydrogenase (NAD+) activity"/>
    <property type="evidence" value="ECO:0007669"/>
    <property type="project" value="UniProtKB-UniRule"/>
</dbReference>
<dbReference type="GO" id="GO:0052733">
    <property type="term" value="F:quinate 3-dehydrogenase (NADP+) activity"/>
    <property type="evidence" value="ECO:0007669"/>
    <property type="project" value="InterPro"/>
</dbReference>
<dbReference type="GO" id="GO:0052734">
    <property type="term" value="F:shikimate 3-dehydrogenase (NAD+) activity"/>
    <property type="evidence" value="ECO:0007669"/>
    <property type="project" value="InterPro"/>
</dbReference>
<dbReference type="GO" id="GO:0004764">
    <property type="term" value="F:shikimate 3-dehydrogenase (NADP+) activity"/>
    <property type="evidence" value="ECO:0007669"/>
    <property type="project" value="UniProtKB-UniRule"/>
</dbReference>
<dbReference type="GO" id="GO:0008652">
    <property type="term" value="P:amino acid biosynthetic process"/>
    <property type="evidence" value="ECO:0007669"/>
    <property type="project" value="UniProtKB-KW"/>
</dbReference>
<dbReference type="GO" id="GO:0009073">
    <property type="term" value="P:aromatic amino acid family biosynthetic process"/>
    <property type="evidence" value="ECO:0007669"/>
    <property type="project" value="UniProtKB-KW"/>
</dbReference>
<dbReference type="GO" id="GO:0009423">
    <property type="term" value="P:chorismate biosynthetic process"/>
    <property type="evidence" value="ECO:0007669"/>
    <property type="project" value="UniProtKB-UniRule"/>
</dbReference>
<dbReference type="GO" id="GO:0019632">
    <property type="term" value="P:shikimate metabolic process"/>
    <property type="evidence" value="ECO:0007669"/>
    <property type="project" value="TreeGrafter"/>
</dbReference>
<dbReference type="CDD" id="cd01065">
    <property type="entry name" value="NAD_bind_Shikimate_DH"/>
    <property type="match status" value="1"/>
</dbReference>
<dbReference type="FunFam" id="3.40.50.10860:FF:000004">
    <property type="entry name" value="Quinate/shikimate dehydrogenase"/>
    <property type="match status" value="1"/>
</dbReference>
<dbReference type="FunFam" id="3.40.50.720:FF:000086">
    <property type="entry name" value="Quinate/shikimate dehydrogenase"/>
    <property type="match status" value="1"/>
</dbReference>
<dbReference type="Gene3D" id="3.40.50.10860">
    <property type="entry name" value="Leucine Dehydrogenase, chain A, domain 1"/>
    <property type="match status" value="1"/>
</dbReference>
<dbReference type="Gene3D" id="3.40.50.720">
    <property type="entry name" value="NAD(P)-binding Rossmann-like Domain"/>
    <property type="match status" value="1"/>
</dbReference>
<dbReference type="HAMAP" id="MF_00222">
    <property type="entry name" value="Shikimate_DH_AroE"/>
    <property type="match status" value="1"/>
</dbReference>
<dbReference type="HAMAP" id="MF_01578">
    <property type="entry name" value="Shikimate_DH_YdiB"/>
    <property type="match status" value="1"/>
</dbReference>
<dbReference type="InterPro" id="IPR046346">
    <property type="entry name" value="Aminoacid_DH-like_N_sf"/>
</dbReference>
<dbReference type="InterPro" id="IPR036291">
    <property type="entry name" value="NAD(P)-bd_dom_sf"/>
</dbReference>
<dbReference type="InterPro" id="IPR022872">
    <property type="entry name" value="Quinate/Shikimate_DH"/>
</dbReference>
<dbReference type="InterPro" id="IPR041121">
    <property type="entry name" value="SDH_C"/>
</dbReference>
<dbReference type="InterPro" id="IPR013708">
    <property type="entry name" value="Shikimate_DH-bd_N"/>
</dbReference>
<dbReference type="InterPro" id="IPR022893">
    <property type="entry name" value="Shikimate_DH_fam"/>
</dbReference>
<dbReference type="NCBIfam" id="NF009390">
    <property type="entry name" value="PRK12749.1"/>
    <property type="match status" value="1"/>
</dbReference>
<dbReference type="PANTHER" id="PTHR21089:SF1">
    <property type="entry name" value="BIFUNCTIONAL 3-DEHYDROQUINATE DEHYDRATASE_SHIKIMATE DEHYDROGENASE, CHLOROPLASTIC"/>
    <property type="match status" value="1"/>
</dbReference>
<dbReference type="PANTHER" id="PTHR21089">
    <property type="entry name" value="SHIKIMATE DEHYDROGENASE"/>
    <property type="match status" value="1"/>
</dbReference>
<dbReference type="Pfam" id="PF18317">
    <property type="entry name" value="SDH_C"/>
    <property type="match status" value="1"/>
</dbReference>
<dbReference type="Pfam" id="PF08501">
    <property type="entry name" value="Shikimate_dh_N"/>
    <property type="match status" value="1"/>
</dbReference>
<dbReference type="SUPFAM" id="SSF53223">
    <property type="entry name" value="Aminoacid dehydrogenase-like, N-terminal domain"/>
    <property type="match status" value="1"/>
</dbReference>
<dbReference type="SUPFAM" id="SSF51735">
    <property type="entry name" value="NAD(P)-binding Rossmann-fold domains"/>
    <property type="match status" value="1"/>
</dbReference>
<protein>
    <recommendedName>
        <fullName evidence="1">Quinate/shikimate dehydrogenase</fullName>
        <ecNumber evidence="1">1.1.1.282</ecNumber>
    </recommendedName>
    <alternativeName>
        <fullName evidence="1">NAD-dependent shikimate 5-dehydrogenase</fullName>
    </alternativeName>
</protein>
<accession>A1ABM9</accession>
<organism>
    <name type="scientific">Escherichia coli O1:K1 / APEC</name>
    <dbReference type="NCBI Taxonomy" id="405955"/>
    <lineage>
        <taxon>Bacteria</taxon>
        <taxon>Pseudomonadati</taxon>
        <taxon>Pseudomonadota</taxon>
        <taxon>Gammaproteobacteria</taxon>
        <taxon>Enterobacterales</taxon>
        <taxon>Enterobacteriaceae</taxon>
        <taxon>Escherichia</taxon>
    </lineage>
</organism>
<reference key="1">
    <citation type="journal article" date="2007" name="J. Bacteriol.">
        <title>The genome sequence of avian pathogenic Escherichia coli strain O1:K1:H7 shares strong similarities with human extraintestinal pathogenic E. coli genomes.</title>
        <authorList>
            <person name="Johnson T.J."/>
            <person name="Kariyawasam S."/>
            <person name="Wannemuehler Y."/>
            <person name="Mangiamele P."/>
            <person name="Johnson S.J."/>
            <person name="Doetkott C."/>
            <person name="Skyberg J.A."/>
            <person name="Lynne A.M."/>
            <person name="Johnson J.R."/>
            <person name="Nolan L.K."/>
        </authorList>
    </citation>
    <scope>NUCLEOTIDE SEQUENCE [LARGE SCALE GENOMIC DNA]</scope>
</reference>
<comment type="function">
    <text evidence="1">The actual biological function of YdiB remains unclear, nor is it known whether 3-dehydroshikimate or quinate represents the natural substrate. Catalyzes the reversible NAD-dependent reduction of both 3-dehydroshikimate (DHSA) and 3-dehydroquinate to yield shikimate (SA) and quinate, respectively. It can use both NAD or NADP for catalysis, however it has higher catalytic efficiency with NAD.</text>
</comment>
<comment type="catalytic activity">
    <reaction evidence="1">
        <text>L-quinate + NAD(+) = 3-dehydroquinate + NADH + H(+)</text>
        <dbReference type="Rhea" id="RHEA:22364"/>
        <dbReference type="ChEBI" id="CHEBI:15378"/>
        <dbReference type="ChEBI" id="CHEBI:29751"/>
        <dbReference type="ChEBI" id="CHEBI:32364"/>
        <dbReference type="ChEBI" id="CHEBI:57540"/>
        <dbReference type="ChEBI" id="CHEBI:57945"/>
        <dbReference type="EC" id="1.1.1.282"/>
    </reaction>
</comment>
<comment type="catalytic activity">
    <reaction evidence="1">
        <text>L-quinate + NADP(+) = 3-dehydroquinate + NADPH + H(+)</text>
        <dbReference type="Rhea" id="RHEA:18425"/>
        <dbReference type="ChEBI" id="CHEBI:15378"/>
        <dbReference type="ChEBI" id="CHEBI:29751"/>
        <dbReference type="ChEBI" id="CHEBI:32364"/>
        <dbReference type="ChEBI" id="CHEBI:57783"/>
        <dbReference type="ChEBI" id="CHEBI:58349"/>
        <dbReference type="EC" id="1.1.1.282"/>
    </reaction>
</comment>
<comment type="catalytic activity">
    <reaction evidence="1">
        <text>shikimate + NADP(+) = 3-dehydroshikimate + NADPH + H(+)</text>
        <dbReference type="Rhea" id="RHEA:17737"/>
        <dbReference type="ChEBI" id="CHEBI:15378"/>
        <dbReference type="ChEBI" id="CHEBI:16630"/>
        <dbReference type="ChEBI" id="CHEBI:36208"/>
        <dbReference type="ChEBI" id="CHEBI:57783"/>
        <dbReference type="ChEBI" id="CHEBI:58349"/>
        <dbReference type="EC" id="1.1.1.282"/>
    </reaction>
</comment>
<comment type="catalytic activity">
    <reaction evidence="1">
        <text>shikimate + NAD(+) = 3-dehydroshikimate + NADH + H(+)</text>
        <dbReference type="Rhea" id="RHEA:17741"/>
        <dbReference type="ChEBI" id="CHEBI:15378"/>
        <dbReference type="ChEBI" id="CHEBI:16630"/>
        <dbReference type="ChEBI" id="CHEBI:36208"/>
        <dbReference type="ChEBI" id="CHEBI:57540"/>
        <dbReference type="ChEBI" id="CHEBI:57945"/>
        <dbReference type="EC" id="1.1.1.282"/>
    </reaction>
</comment>
<comment type="pathway">
    <text evidence="1">Metabolic intermediate biosynthesis; chorismate biosynthesis; chorismate from D-erythrose 4-phosphate and phosphoenolpyruvate: step 4/7.</text>
</comment>
<comment type="subunit">
    <text evidence="1">Homodimer.</text>
</comment>
<comment type="similarity">
    <text evidence="1">Belongs to the shikimate dehydrogenase family.</text>
</comment>